<keyword id="KW-0963">Cytoplasm</keyword>
<keyword id="KW-0251">Elongation factor</keyword>
<keyword id="KW-0648">Protein biosynthesis</keyword>
<evidence type="ECO:0000255" key="1">
    <source>
        <dbReference type="HAMAP-Rule" id="MF_00050"/>
    </source>
</evidence>
<accession>B7HLF9</accession>
<protein>
    <recommendedName>
        <fullName evidence="1">Elongation factor Ts</fullName>
        <shortName evidence="1">EF-Ts</shortName>
    </recommendedName>
</protein>
<reference key="1">
    <citation type="submission" date="2008-10" db="EMBL/GenBank/DDBJ databases">
        <title>Genome sequence of Bacillus cereus AH187.</title>
        <authorList>
            <person name="Dodson R.J."/>
            <person name="Durkin A.S."/>
            <person name="Rosovitz M.J."/>
            <person name="Rasko D.A."/>
            <person name="Kolsto A.B."/>
            <person name="Okstad O.A."/>
            <person name="Ravel J."/>
            <person name="Sutton G."/>
        </authorList>
    </citation>
    <scope>NUCLEOTIDE SEQUENCE [LARGE SCALE GENOMIC DNA]</scope>
    <source>
        <strain>AH187</strain>
    </source>
</reference>
<organism>
    <name type="scientific">Bacillus cereus (strain AH187)</name>
    <dbReference type="NCBI Taxonomy" id="405534"/>
    <lineage>
        <taxon>Bacteria</taxon>
        <taxon>Bacillati</taxon>
        <taxon>Bacillota</taxon>
        <taxon>Bacilli</taxon>
        <taxon>Bacillales</taxon>
        <taxon>Bacillaceae</taxon>
        <taxon>Bacillus</taxon>
        <taxon>Bacillus cereus group</taxon>
    </lineage>
</organism>
<feature type="chain" id="PRO_1000116691" description="Elongation factor Ts">
    <location>
        <begin position="1"/>
        <end position="295"/>
    </location>
</feature>
<feature type="region of interest" description="Involved in Mg(2+) ion dislocation from EF-Tu" evidence="1">
    <location>
        <begin position="79"/>
        <end position="82"/>
    </location>
</feature>
<name>EFTS_BACC7</name>
<dbReference type="EMBL" id="CP001177">
    <property type="protein sequence ID" value="ACJ82163.1"/>
    <property type="molecule type" value="Genomic_DNA"/>
</dbReference>
<dbReference type="SMR" id="B7HLF9"/>
<dbReference type="KEGG" id="bcr:BCAH187_A3873"/>
<dbReference type="HOGENOM" id="CLU_047155_0_2_9"/>
<dbReference type="Proteomes" id="UP000002214">
    <property type="component" value="Chromosome"/>
</dbReference>
<dbReference type="GO" id="GO:0005737">
    <property type="term" value="C:cytoplasm"/>
    <property type="evidence" value="ECO:0007669"/>
    <property type="project" value="UniProtKB-SubCell"/>
</dbReference>
<dbReference type="GO" id="GO:0003746">
    <property type="term" value="F:translation elongation factor activity"/>
    <property type="evidence" value="ECO:0007669"/>
    <property type="project" value="UniProtKB-UniRule"/>
</dbReference>
<dbReference type="CDD" id="cd14275">
    <property type="entry name" value="UBA_EF-Ts"/>
    <property type="match status" value="1"/>
</dbReference>
<dbReference type="FunFam" id="1.10.286.20:FF:000003">
    <property type="entry name" value="Elongation factor Ts"/>
    <property type="match status" value="1"/>
</dbReference>
<dbReference type="FunFam" id="1.10.8.10:FF:000001">
    <property type="entry name" value="Elongation factor Ts"/>
    <property type="match status" value="1"/>
</dbReference>
<dbReference type="FunFam" id="3.30.479.20:FF:000005">
    <property type="entry name" value="Elongation factor Ts"/>
    <property type="match status" value="1"/>
</dbReference>
<dbReference type="Gene3D" id="1.10.286.20">
    <property type="match status" value="1"/>
</dbReference>
<dbReference type="Gene3D" id="1.10.8.10">
    <property type="entry name" value="DNA helicase RuvA subunit, C-terminal domain"/>
    <property type="match status" value="1"/>
</dbReference>
<dbReference type="Gene3D" id="3.30.479.20">
    <property type="entry name" value="Elongation factor Ts, dimerisation domain"/>
    <property type="match status" value="2"/>
</dbReference>
<dbReference type="HAMAP" id="MF_00050">
    <property type="entry name" value="EF_Ts"/>
    <property type="match status" value="1"/>
</dbReference>
<dbReference type="InterPro" id="IPR036402">
    <property type="entry name" value="EF-Ts_dimer_sf"/>
</dbReference>
<dbReference type="InterPro" id="IPR001816">
    <property type="entry name" value="Transl_elong_EFTs/EF1B"/>
</dbReference>
<dbReference type="InterPro" id="IPR014039">
    <property type="entry name" value="Transl_elong_EFTs/EF1B_dimer"/>
</dbReference>
<dbReference type="InterPro" id="IPR018101">
    <property type="entry name" value="Transl_elong_Ts_CS"/>
</dbReference>
<dbReference type="InterPro" id="IPR009060">
    <property type="entry name" value="UBA-like_sf"/>
</dbReference>
<dbReference type="NCBIfam" id="TIGR00116">
    <property type="entry name" value="tsf"/>
    <property type="match status" value="1"/>
</dbReference>
<dbReference type="PANTHER" id="PTHR11741">
    <property type="entry name" value="ELONGATION FACTOR TS"/>
    <property type="match status" value="1"/>
</dbReference>
<dbReference type="PANTHER" id="PTHR11741:SF0">
    <property type="entry name" value="ELONGATION FACTOR TS, MITOCHONDRIAL"/>
    <property type="match status" value="1"/>
</dbReference>
<dbReference type="Pfam" id="PF00889">
    <property type="entry name" value="EF_TS"/>
    <property type="match status" value="1"/>
</dbReference>
<dbReference type="SUPFAM" id="SSF54713">
    <property type="entry name" value="Elongation factor Ts (EF-Ts), dimerisation domain"/>
    <property type="match status" value="2"/>
</dbReference>
<dbReference type="SUPFAM" id="SSF46934">
    <property type="entry name" value="UBA-like"/>
    <property type="match status" value="1"/>
</dbReference>
<dbReference type="PROSITE" id="PS01126">
    <property type="entry name" value="EF_TS_1"/>
    <property type="match status" value="1"/>
</dbReference>
<dbReference type="PROSITE" id="PS01127">
    <property type="entry name" value="EF_TS_2"/>
    <property type="match status" value="1"/>
</dbReference>
<gene>
    <name evidence="1" type="primary">tsf</name>
    <name type="ordered locus">BCAH187_A3873</name>
</gene>
<proteinExistence type="inferred from homology"/>
<comment type="function">
    <text evidence="1">Associates with the EF-Tu.GDP complex and induces the exchange of GDP to GTP. It remains bound to the aminoacyl-tRNA.EF-Tu.GTP complex up to the GTP hydrolysis stage on the ribosome.</text>
</comment>
<comment type="subcellular location">
    <subcellularLocation>
        <location evidence="1">Cytoplasm</location>
    </subcellularLocation>
</comment>
<comment type="similarity">
    <text evidence="1">Belongs to the EF-Ts family.</text>
</comment>
<sequence>MAITAQMVKELREKTGAGMMDCKKALTETNGDMEKAIDFLREKGIAKAAKKADRIAAEGLTFIETNGNDGLILELNSETDFVAKNEGFQTLIKELAAHLLAKKPANVEEAMAQTMENGKKVEEHINEAIAKIGEKLTLRRFEIVSKTDADAFGAYLHMGGRIGVLTVLEGSTDEAAAKDVAMHIAAVNPKYIDRDAVTAEEVEHERQVLTQQALNEGKPEKIVAKMVEGRLGKFFEEICLLDQAFVKNPDMKVRQFVESKGATLKGFVRYAVGEGIEKREDNFAEEVMNQVKGSN</sequence>